<sequence length="550" mass="58771">MTMAACYANYDMSSLSHGMSALSALQQQQQQQQQQHSQTQQQHHHQQQQQHMYHAAVAAHQQQLLQQQQQQQHHRHHHQPANTSSSSNSRHSHAAATQTQVAAAVANSRQQQQQQQQQQQQQQQQQTASSNSNAAPAPSPQKDYSIPLHVDCSVEYELPNQPKPPAGQRVEPLLMIHPCYFRKMESQRRSPFVNNMHATARAVSSSSLSSGAALGGGGSGAAVATAPSSSAARRGARAATSAQQQQQQQQRYQQQQQQLRQQHQQMSQMSQQAHYPQQQSSLVRQHQQQQQQQQQQQRASSNQSQRQSQSQSQSQSHAANSAAAAAAQASIAAAAAGQWDQLAALAARTALTPHHMLHPHSHYAAKGSGGGAGGGKRDAMISGSYGQTAVASGKLQQSQVQQQQPQQQQQHCLPPPPWDATSMLMDRSPMATVPSNYQAGPDTNPMRLYSATPTAGAASGGSASVGGGGAVSGAGATGAVNTATDKLSGKYRQYLRSQRMHPYAAAASLNLAAAAAAAGQTSFVPFSSAATAVAATPTFQHLPQISCYNV</sequence>
<accession>P41046</accession>
<accession>Q24271</accession>
<accession>Q494K5</accession>
<accession>Q961I6</accession>
<accession>Q9VN76</accession>
<gene>
    <name type="primary">corto</name>
    <name type="synonym">ccf</name>
    <name type="ORF">CG2530</name>
</gene>
<dbReference type="EMBL" id="U35074">
    <property type="protein sequence ID" value="AAC13917.1"/>
    <property type="molecule type" value="mRNA"/>
</dbReference>
<dbReference type="EMBL" id="D43795">
    <property type="protein sequence ID" value="BAA07853.1"/>
    <property type="status" value="ALT_FRAME"/>
    <property type="molecule type" value="mRNA"/>
</dbReference>
<dbReference type="EMBL" id="AE014297">
    <property type="protein sequence ID" value="AAF52073.1"/>
    <property type="molecule type" value="Genomic_DNA"/>
</dbReference>
<dbReference type="EMBL" id="BT023771">
    <property type="protein sequence ID" value="AAZ41779.1"/>
    <property type="molecule type" value="mRNA"/>
</dbReference>
<dbReference type="EMBL" id="AY051569">
    <property type="protein sequence ID" value="AAK92993.1"/>
    <property type="status" value="ALT_FRAME"/>
    <property type="molecule type" value="mRNA"/>
</dbReference>
<dbReference type="RefSeq" id="NP_001246921.1">
    <property type="nucleotide sequence ID" value="NM_001259992.2"/>
</dbReference>
<dbReference type="RefSeq" id="NP_001246922.1">
    <property type="nucleotide sequence ID" value="NM_001259993.3"/>
</dbReference>
<dbReference type="RefSeq" id="NP_001246923.1">
    <property type="nucleotide sequence ID" value="NM_001259994.2"/>
</dbReference>
<dbReference type="RefSeq" id="NP_001287166.1">
    <property type="nucleotide sequence ID" value="NM_001300237.1"/>
</dbReference>
<dbReference type="RefSeq" id="NP_524231.2">
    <property type="nucleotide sequence ID" value="NM_079507.4"/>
</dbReference>
<dbReference type="BioGRID" id="65830">
    <property type="interactions" value="24"/>
</dbReference>
<dbReference type="DIP" id="DIP-22699N"/>
<dbReference type="FunCoup" id="P41046">
    <property type="interactions" value="113"/>
</dbReference>
<dbReference type="IntAct" id="P41046">
    <property type="interactions" value="6"/>
</dbReference>
<dbReference type="STRING" id="7227.FBpp0300441"/>
<dbReference type="PaxDb" id="7227-FBpp0300441"/>
<dbReference type="DNASU" id="40616"/>
<dbReference type="EnsemblMetazoa" id="FBtr0078844">
    <property type="protein sequence ID" value="FBpp0078485"/>
    <property type="gene ID" value="FBgn0010313"/>
</dbReference>
<dbReference type="EnsemblMetazoa" id="FBtr0308118">
    <property type="protein sequence ID" value="FBpp0300440"/>
    <property type="gene ID" value="FBgn0010313"/>
</dbReference>
<dbReference type="EnsemblMetazoa" id="FBtr0308119">
    <property type="protein sequence ID" value="FBpp0300441"/>
    <property type="gene ID" value="FBgn0010313"/>
</dbReference>
<dbReference type="EnsemblMetazoa" id="FBtr0308120">
    <property type="protein sequence ID" value="FBpp0300442"/>
    <property type="gene ID" value="FBgn0010313"/>
</dbReference>
<dbReference type="EnsemblMetazoa" id="FBtr0345141">
    <property type="protein sequence ID" value="FBpp0311362"/>
    <property type="gene ID" value="FBgn0010313"/>
</dbReference>
<dbReference type="GeneID" id="40616"/>
<dbReference type="KEGG" id="dme:Dmel_CG2530"/>
<dbReference type="AGR" id="FB:FBgn0010313"/>
<dbReference type="CTD" id="40616"/>
<dbReference type="FlyBase" id="FBgn0010313">
    <property type="gene designation" value="corto"/>
</dbReference>
<dbReference type="VEuPathDB" id="VectorBase:FBgn0010313"/>
<dbReference type="eggNOG" id="ENOG502S1QD">
    <property type="taxonomic scope" value="Eukaryota"/>
</dbReference>
<dbReference type="HOGENOM" id="CLU_465608_0_0_1"/>
<dbReference type="InParanoid" id="P41046"/>
<dbReference type="OMA" id="PFVNNMQ"/>
<dbReference type="OrthoDB" id="8186948at2759"/>
<dbReference type="PhylomeDB" id="P41046"/>
<dbReference type="SignaLink" id="P41046"/>
<dbReference type="BioGRID-ORCS" id="40616">
    <property type="hits" value="0 hits in 1 CRISPR screen"/>
</dbReference>
<dbReference type="ChiTaRS" id="corto">
    <property type="organism name" value="fly"/>
</dbReference>
<dbReference type="GenomeRNAi" id="40616"/>
<dbReference type="PRO" id="PR:P41046"/>
<dbReference type="Proteomes" id="UP000000803">
    <property type="component" value="Chromosome 3R"/>
</dbReference>
<dbReference type="Bgee" id="FBgn0010313">
    <property type="expression patterns" value="Expressed in adult tracheocyte (Drosophila) in open tracheal system trachea and 314 other cell types or tissues"/>
</dbReference>
<dbReference type="ExpressionAtlas" id="P41046">
    <property type="expression patterns" value="baseline and differential"/>
</dbReference>
<dbReference type="GO" id="GO:0005813">
    <property type="term" value="C:centrosome"/>
    <property type="evidence" value="ECO:0000314"/>
    <property type="project" value="FlyBase"/>
</dbReference>
<dbReference type="GO" id="GO:0005737">
    <property type="term" value="C:cytoplasm"/>
    <property type="evidence" value="ECO:0007005"/>
    <property type="project" value="FlyBase"/>
</dbReference>
<dbReference type="GO" id="GO:0035098">
    <property type="term" value="C:ESC/E(Z) complex"/>
    <property type="evidence" value="ECO:0000353"/>
    <property type="project" value="UniProtKB"/>
</dbReference>
<dbReference type="GO" id="GO:0005634">
    <property type="term" value="C:nucleus"/>
    <property type="evidence" value="ECO:0000314"/>
    <property type="project" value="FlyBase"/>
</dbReference>
<dbReference type="GO" id="GO:0005700">
    <property type="term" value="C:polytene chromosome"/>
    <property type="evidence" value="ECO:0000314"/>
    <property type="project" value="UniProtKB"/>
</dbReference>
<dbReference type="GO" id="GO:0035102">
    <property type="term" value="C:PRC1 complex"/>
    <property type="evidence" value="ECO:0000353"/>
    <property type="project" value="UniProtKB"/>
</dbReference>
<dbReference type="GO" id="GO:0003682">
    <property type="term" value="F:chromatin binding"/>
    <property type="evidence" value="ECO:0000314"/>
    <property type="project" value="FlyBase"/>
</dbReference>
<dbReference type="GO" id="GO:0003677">
    <property type="term" value="F:DNA binding"/>
    <property type="evidence" value="ECO:0007669"/>
    <property type="project" value="UniProtKB-KW"/>
</dbReference>
<dbReference type="GO" id="GO:0042802">
    <property type="term" value="F:identical protein binding"/>
    <property type="evidence" value="ECO:0000353"/>
    <property type="project" value="UniProtKB"/>
</dbReference>
<dbReference type="GO" id="GO:0042803">
    <property type="term" value="F:protein homodimerization activity"/>
    <property type="evidence" value="ECO:0000353"/>
    <property type="project" value="UniProtKB"/>
</dbReference>
<dbReference type="GO" id="GO:0051301">
    <property type="term" value="P:cell division"/>
    <property type="evidence" value="ECO:0007669"/>
    <property type="project" value="UniProtKB-KW"/>
</dbReference>
<dbReference type="GO" id="GO:0060429">
    <property type="term" value="P:epithelium development"/>
    <property type="evidence" value="ECO:0000316"/>
    <property type="project" value="FlyBase"/>
</dbReference>
<dbReference type="GO" id="GO:0031507">
    <property type="term" value="P:heterochromatin formation"/>
    <property type="evidence" value="ECO:0000305"/>
    <property type="project" value="UniProtKB"/>
</dbReference>
<dbReference type="GO" id="GO:0007474">
    <property type="term" value="P:imaginal disc-derived wing vein specification"/>
    <property type="evidence" value="ECO:0000315"/>
    <property type="project" value="FlyBase"/>
</dbReference>
<dbReference type="GO" id="GO:0007076">
    <property type="term" value="P:mitotic chromosome condensation"/>
    <property type="evidence" value="ECO:0000315"/>
    <property type="project" value="FlyBase"/>
</dbReference>
<dbReference type="GO" id="GO:0010468">
    <property type="term" value="P:regulation of gene expression"/>
    <property type="evidence" value="ECO:0000314"/>
    <property type="project" value="FlyBase"/>
</dbReference>
<comment type="function">
    <text evidence="4 5 6">Essential protein required for proper condensation of mitotic chromosomes and progression through mitosis (PubMed:9463384). Binds to specific polytene chromosome sites, many of which are shared with the posterior sex combs (Psc) protein (PubMed:9463384). Involved in maintaining Abd-B repression outside its normal expression domain (PubMed:18286205, PubMed:18667003).</text>
</comment>
<comment type="subunit">
    <text evidence="3 4">Homodimer (PubMed:12771214). Interacts with esc, Trl, E(z), scm and ph-p in vitro (PubMed:12771214). Found in vivo in an esc-containing complex, which may be the Esc/E(z) complex (PubMed:12771214). Also found in vivo in a Pc-containing complex that may be the PRC1 complex, but does not interact with Pc directly (PubMed:12771214). Interacts with cyclin CycG (PubMed:18286205).</text>
</comment>
<comment type="interaction">
    <interactant intactId="EBI-300379">
        <id>P41046</id>
    </interactant>
    <interactant intactId="EBI-300379">
        <id>P41046</id>
        <label>corto</label>
    </interactant>
    <organismsDiffer>false</organismsDiffer>
    <experiments>2</experiments>
</comment>
<comment type="interaction">
    <interactant intactId="EBI-300379">
        <id>P41046</id>
    </interactant>
    <interactant intactId="EBI-112315">
        <id>P42124</id>
        <label>E(z)</label>
    </interactant>
    <organismsDiffer>false</organismsDiffer>
    <experiments>2</experiments>
</comment>
<comment type="interaction">
    <interactant intactId="EBI-300379">
        <id>P41046</id>
    </interactant>
    <interactant intactId="EBI-88911">
        <id>Q24338</id>
        <label>esc</label>
    </interactant>
    <organismsDiffer>false</organismsDiffer>
    <experiments>3</experiments>
</comment>
<comment type="interaction">
    <interactant intactId="EBI-300379">
        <id>P41046</id>
    </interactant>
    <interactant intactId="EBI-300360">
        <id>P39769</id>
        <label>ph-p</label>
    </interactant>
    <organismsDiffer>false</organismsDiffer>
    <experiments>2</experiments>
</comment>
<comment type="interaction">
    <interactant intactId="EBI-300379">
        <id>P41046</id>
    </interactant>
    <interactant intactId="EBI-89256">
        <id>Q9VHA0</id>
        <label>Scm</label>
    </interactant>
    <organismsDiffer>false</organismsDiffer>
    <experiments>2</experiments>
</comment>
<comment type="interaction">
    <interactant intactId="EBI-300379">
        <id>P41046</id>
    </interactant>
    <interactant intactId="EBI-300317">
        <id>Q08605</id>
        <label>Trl</label>
    </interactant>
    <organismsDiffer>false</organismsDiffer>
    <experiments>2</experiments>
</comment>
<comment type="subcellular location">
    <subcellularLocation>
        <location evidence="6">Nucleus</location>
    </subcellularLocation>
    <subcellularLocation>
        <location evidence="6">Cytoplasm</location>
        <location evidence="6">Cytoskeleton</location>
        <location evidence="6">Microtubule organizing center</location>
        <location evidence="6">Centrosome</location>
    </subcellularLocation>
    <subcellularLocation>
        <location evidence="3 4">Chromosome</location>
    </subcellularLocation>
</comment>
<comment type="developmental stage">
    <text>Expressed during oogenesis, embryonic and larval stages.</text>
</comment>
<comment type="sequence caution" evidence="7">
    <conflict type="frameshift">
        <sequence resource="EMBL-CDS" id="AAK92993"/>
    </conflict>
</comment>
<comment type="sequence caution" evidence="7">
    <conflict type="frameshift">
        <sequence resource="EMBL-CDS" id="BAA07853"/>
    </conflict>
</comment>
<evidence type="ECO:0000255" key="1"/>
<evidence type="ECO:0000256" key="2">
    <source>
        <dbReference type="SAM" id="MobiDB-lite"/>
    </source>
</evidence>
<evidence type="ECO:0000269" key="3">
    <source>
    </source>
</evidence>
<evidence type="ECO:0000269" key="4">
    <source>
    </source>
</evidence>
<evidence type="ECO:0000269" key="5">
    <source>
    </source>
</evidence>
<evidence type="ECO:0000269" key="6">
    <source>
    </source>
</evidence>
<evidence type="ECO:0000305" key="7"/>
<protein>
    <recommendedName>
        <fullName>Centrosomal and chromosomal factor</fullName>
        <shortName>CCF</shortName>
    </recommendedName>
    <alternativeName>
        <fullName>Chromocentrosomin</fullName>
    </alternativeName>
</protein>
<feature type="chain" id="PRO_0000079256" description="Centrosomal and chromosomal factor">
    <location>
        <begin position="1"/>
        <end position="550"/>
    </location>
</feature>
<feature type="region of interest" description="Disordered" evidence="2">
    <location>
        <begin position="21"/>
        <end position="145"/>
    </location>
</feature>
<feature type="region of interest" description="Disordered" evidence="2">
    <location>
        <begin position="208"/>
        <end position="320"/>
    </location>
</feature>
<feature type="region of interest" description="Disordered" evidence="2">
    <location>
        <begin position="361"/>
        <end position="380"/>
    </location>
</feature>
<feature type="region of interest" description="Disordered" evidence="2">
    <location>
        <begin position="392"/>
        <end position="465"/>
    </location>
</feature>
<feature type="coiled-coil region" evidence="1">
    <location>
        <begin position="20"/>
        <end position="44"/>
    </location>
</feature>
<feature type="coiled-coil region" evidence="1">
    <location>
        <begin position="105"/>
        <end position="126"/>
    </location>
</feature>
<feature type="coiled-coil region" evidence="1">
    <location>
        <begin position="239"/>
        <end position="274"/>
    </location>
</feature>
<feature type="compositionally biased region" description="Low complexity" evidence="2">
    <location>
        <begin position="24"/>
        <end position="71"/>
    </location>
</feature>
<feature type="compositionally biased region" description="Low complexity" evidence="2">
    <location>
        <begin position="81"/>
        <end position="136"/>
    </location>
</feature>
<feature type="compositionally biased region" description="Low complexity" evidence="2">
    <location>
        <begin position="221"/>
        <end position="320"/>
    </location>
</feature>
<feature type="compositionally biased region" description="Low complexity" evidence="2">
    <location>
        <begin position="396"/>
        <end position="412"/>
    </location>
</feature>
<feature type="compositionally biased region" description="Low complexity" evidence="2">
    <location>
        <begin position="450"/>
        <end position="462"/>
    </location>
</feature>
<feature type="sequence conflict" description="In Ref. 1; AAC13917." evidence="7" ref="1">
    <original>A</original>
    <variation>T</variation>
    <location>
        <position position="134"/>
    </location>
</feature>
<feature type="sequence conflict" description="In Ref. 1; AAC13917." evidence="7" ref="1">
    <original>GA</original>
    <variation>EQ</variation>
    <location>
        <begin position="371"/>
        <end position="372"/>
    </location>
</feature>
<reference key="1">
    <citation type="journal article" date="1998" name="EMBO J.">
        <title>Mutations in ccf, a novel Drosophila gene encoding a chromosomal factor, affect progression through mitosis and interact with Pc-G mutations.</title>
        <authorList>
            <person name="Kodjabachian L."/>
            <person name="Delaage M."/>
            <person name="Maurel C."/>
            <person name="Miassod R."/>
            <person name="Jacq B."/>
            <person name="Rosset R."/>
        </authorList>
    </citation>
    <scope>NUCLEOTIDE SEQUENCE [MRNA]</scope>
    <scope>FUNCTION</scope>
    <scope>SUBCELLULAR LOCATION</scope>
    <source>
        <strain>Oregon-R</strain>
    </source>
</reference>
<reference key="2">
    <citation type="submission" date="1994-12" db="EMBL/GenBank/DDBJ databases">
        <title>Drosophila melanogaster cDNA which encodes a protein stimulating transcription based on human CAAT motif.</title>
        <authorList>
            <person name="Takamura C."/>
            <person name="Imamura Y."/>
            <person name="Taira T."/>
            <person name="Iguchi-Ariga S."/>
            <person name="Ariga H."/>
        </authorList>
    </citation>
    <scope>NUCLEOTIDE SEQUENCE [MRNA]</scope>
    <source>
        <tissue>Embryo</tissue>
    </source>
</reference>
<reference key="3">
    <citation type="journal article" date="2000" name="Science">
        <title>The genome sequence of Drosophila melanogaster.</title>
        <authorList>
            <person name="Adams M.D."/>
            <person name="Celniker S.E."/>
            <person name="Holt R.A."/>
            <person name="Evans C.A."/>
            <person name="Gocayne J.D."/>
            <person name="Amanatides P.G."/>
            <person name="Scherer S.E."/>
            <person name="Li P.W."/>
            <person name="Hoskins R.A."/>
            <person name="Galle R.F."/>
            <person name="George R.A."/>
            <person name="Lewis S.E."/>
            <person name="Richards S."/>
            <person name="Ashburner M."/>
            <person name="Henderson S.N."/>
            <person name="Sutton G.G."/>
            <person name="Wortman J.R."/>
            <person name="Yandell M.D."/>
            <person name="Zhang Q."/>
            <person name="Chen L.X."/>
            <person name="Brandon R.C."/>
            <person name="Rogers Y.-H.C."/>
            <person name="Blazej R.G."/>
            <person name="Champe M."/>
            <person name="Pfeiffer B.D."/>
            <person name="Wan K.H."/>
            <person name="Doyle C."/>
            <person name="Baxter E.G."/>
            <person name="Helt G."/>
            <person name="Nelson C.R."/>
            <person name="Miklos G.L.G."/>
            <person name="Abril J.F."/>
            <person name="Agbayani A."/>
            <person name="An H.-J."/>
            <person name="Andrews-Pfannkoch C."/>
            <person name="Baldwin D."/>
            <person name="Ballew R.M."/>
            <person name="Basu A."/>
            <person name="Baxendale J."/>
            <person name="Bayraktaroglu L."/>
            <person name="Beasley E.M."/>
            <person name="Beeson K.Y."/>
            <person name="Benos P.V."/>
            <person name="Berman B.P."/>
            <person name="Bhandari D."/>
            <person name="Bolshakov S."/>
            <person name="Borkova D."/>
            <person name="Botchan M.R."/>
            <person name="Bouck J."/>
            <person name="Brokstein P."/>
            <person name="Brottier P."/>
            <person name="Burtis K.C."/>
            <person name="Busam D.A."/>
            <person name="Butler H."/>
            <person name="Cadieu E."/>
            <person name="Center A."/>
            <person name="Chandra I."/>
            <person name="Cherry J.M."/>
            <person name="Cawley S."/>
            <person name="Dahlke C."/>
            <person name="Davenport L.B."/>
            <person name="Davies P."/>
            <person name="de Pablos B."/>
            <person name="Delcher A."/>
            <person name="Deng Z."/>
            <person name="Mays A.D."/>
            <person name="Dew I."/>
            <person name="Dietz S.M."/>
            <person name="Dodson K."/>
            <person name="Doup L.E."/>
            <person name="Downes M."/>
            <person name="Dugan-Rocha S."/>
            <person name="Dunkov B.C."/>
            <person name="Dunn P."/>
            <person name="Durbin K.J."/>
            <person name="Evangelista C.C."/>
            <person name="Ferraz C."/>
            <person name="Ferriera S."/>
            <person name="Fleischmann W."/>
            <person name="Fosler C."/>
            <person name="Gabrielian A.E."/>
            <person name="Garg N.S."/>
            <person name="Gelbart W.M."/>
            <person name="Glasser K."/>
            <person name="Glodek A."/>
            <person name="Gong F."/>
            <person name="Gorrell J.H."/>
            <person name="Gu Z."/>
            <person name="Guan P."/>
            <person name="Harris M."/>
            <person name="Harris N.L."/>
            <person name="Harvey D.A."/>
            <person name="Heiman T.J."/>
            <person name="Hernandez J.R."/>
            <person name="Houck J."/>
            <person name="Hostin D."/>
            <person name="Houston K.A."/>
            <person name="Howland T.J."/>
            <person name="Wei M.-H."/>
            <person name="Ibegwam C."/>
            <person name="Jalali M."/>
            <person name="Kalush F."/>
            <person name="Karpen G.H."/>
            <person name="Ke Z."/>
            <person name="Kennison J.A."/>
            <person name="Ketchum K.A."/>
            <person name="Kimmel B.E."/>
            <person name="Kodira C.D."/>
            <person name="Kraft C.L."/>
            <person name="Kravitz S."/>
            <person name="Kulp D."/>
            <person name="Lai Z."/>
            <person name="Lasko P."/>
            <person name="Lei Y."/>
            <person name="Levitsky A.A."/>
            <person name="Li J.H."/>
            <person name="Li Z."/>
            <person name="Liang Y."/>
            <person name="Lin X."/>
            <person name="Liu X."/>
            <person name="Mattei B."/>
            <person name="McIntosh T.C."/>
            <person name="McLeod M.P."/>
            <person name="McPherson D."/>
            <person name="Merkulov G."/>
            <person name="Milshina N.V."/>
            <person name="Mobarry C."/>
            <person name="Morris J."/>
            <person name="Moshrefi A."/>
            <person name="Mount S.M."/>
            <person name="Moy M."/>
            <person name="Murphy B."/>
            <person name="Murphy L."/>
            <person name="Muzny D.M."/>
            <person name="Nelson D.L."/>
            <person name="Nelson D.R."/>
            <person name="Nelson K.A."/>
            <person name="Nixon K."/>
            <person name="Nusskern D.R."/>
            <person name="Pacleb J.M."/>
            <person name="Palazzolo M."/>
            <person name="Pittman G.S."/>
            <person name="Pan S."/>
            <person name="Pollard J."/>
            <person name="Puri V."/>
            <person name="Reese M.G."/>
            <person name="Reinert K."/>
            <person name="Remington K."/>
            <person name="Saunders R.D.C."/>
            <person name="Scheeler F."/>
            <person name="Shen H."/>
            <person name="Shue B.C."/>
            <person name="Siden-Kiamos I."/>
            <person name="Simpson M."/>
            <person name="Skupski M.P."/>
            <person name="Smith T.J."/>
            <person name="Spier E."/>
            <person name="Spradling A.C."/>
            <person name="Stapleton M."/>
            <person name="Strong R."/>
            <person name="Sun E."/>
            <person name="Svirskas R."/>
            <person name="Tector C."/>
            <person name="Turner R."/>
            <person name="Venter E."/>
            <person name="Wang A.H."/>
            <person name="Wang X."/>
            <person name="Wang Z.-Y."/>
            <person name="Wassarman D.A."/>
            <person name="Weinstock G.M."/>
            <person name="Weissenbach J."/>
            <person name="Williams S.M."/>
            <person name="Woodage T."/>
            <person name="Worley K.C."/>
            <person name="Wu D."/>
            <person name="Yang S."/>
            <person name="Yao Q.A."/>
            <person name="Ye J."/>
            <person name="Yeh R.-F."/>
            <person name="Zaveri J.S."/>
            <person name="Zhan M."/>
            <person name="Zhang G."/>
            <person name="Zhao Q."/>
            <person name="Zheng L."/>
            <person name="Zheng X.H."/>
            <person name="Zhong F.N."/>
            <person name="Zhong W."/>
            <person name="Zhou X."/>
            <person name="Zhu S.C."/>
            <person name="Zhu X."/>
            <person name="Smith H.O."/>
            <person name="Gibbs R.A."/>
            <person name="Myers E.W."/>
            <person name="Rubin G.M."/>
            <person name="Venter J.C."/>
        </authorList>
    </citation>
    <scope>NUCLEOTIDE SEQUENCE [LARGE SCALE GENOMIC DNA]</scope>
    <source>
        <strain>Berkeley</strain>
    </source>
</reference>
<reference key="4">
    <citation type="journal article" date="2002" name="Genome Biol.">
        <title>Annotation of the Drosophila melanogaster euchromatic genome: a systematic review.</title>
        <authorList>
            <person name="Misra S."/>
            <person name="Crosby M.A."/>
            <person name="Mungall C.J."/>
            <person name="Matthews B.B."/>
            <person name="Campbell K.S."/>
            <person name="Hradecky P."/>
            <person name="Huang Y."/>
            <person name="Kaminker J.S."/>
            <person name="Millburn G.H."/>
            <person name="Prochnik S.E."/>
            <person name="Smith C.D."/>
            <person name="Tupy J.L."/>
            <person name="Whitfield E.J."/>
            <person name="Bayraktaroglu L."/>
            <person name="Berman B.P."/>
            <person name="Bettencourt B.R."/>
            <person name="Celniker S.E."/>
            <person name="de Grey A.D.N.J."/>
            <person name="Drysdale R.A."/>
            <person name="Harris N.L."/>
            <person name="Richter J."/>
            <person name="Russo S."/>
            <person name="Schroeder A.J."/>
            <person name="Shu S.Q."/>
            <person name="Stapleton M."/>
            <person name="Yamada C."/>
            <person name="Ashburner M."/>
            <person name="Gelbart W.M."/>
            <person name="Rubin G.M."/>
            <person name="Lewis S.E."/>
        </authorList>
    </citation>
    <scope>GENOME REANNOTATION</scope>
    <source>
        <strain>Berkeley</strain>
    </source>
</reference>
<reference key="5">
    <citation type="submission" date="2005-08" db="EMBL/GenBank/DDBJ databases">
        <authorList>
            <person name="Stapleton M."/>
            <person name="Carlson J.W."/>
            <person name="Chavez C."/>
            <person name="Frise E."/>
            <person name="George R.A."/>
            <person name="Pacleb J.M."/>
            <person name="Park S."/>
            <person name="Wan K.H."/>
            <person name="Yu C."/>
            <person name="Celniker S.E."/>
        </authorList>
    </citation>
    <scope>NUCLEOTIDE SEQUENCE [LARGE SCALE MRNA]</scope>
    <source>
        <strain>Berkeley</strain>
        <tissue>Embryo</tissue>
    </source>
</reference>
<reference key="6">
    <citation type="journal article" date="2002" name="Genome Biol.">
        <title>A Drosophila full-length cDNA resource.</title>
        <authorList>
            <person name="Stapleton M."/>
            <person name="Carlson J.W."/>
            <person name="Brokstein P."/>
            <person name="Yu C."/>
            <person name="Champe M."/>
            <person name="George R.A."/>
            <person name="Guarin H."/>
            <person name="Kronmiller B."/>
            <person name="Pacleb J.M."/>
            <person name="Park S."/>
            <person name="Wan K.H."/>
            <person name="Rubin G.M."/>
            <person name="Celniker S.E."/>
        </authorList>
    </citation>
    <scope>NUCLEOTIDE SEQUENCE [LARGE SCALE MRNA] OF 130-550</scope>
    <source>
        <strain>Berkeley</strain>
        <tissue>Head</tissue>
    </source>
</reference>
<reference key="7">
    <citation type="journal article" date="2003" name="Nucleic Acids Res.">
        <title>The Drosophila Corto protein interacts with Polycomb-group proteins and the GAGA factor.</title>
        <authorList>
            <person name="Salvaing J."/>
            <person name="Lopez A."/>
            <person name="Boivin A."/>
            <person name="Deutsch J.S."/>
            <person name="Peronnet F."/>
        </authorList>
    </citation>
    <scope>INTERACTION WITH ESC; TRL; E(Z); SCM AND PH-P</scope>
    <scope>IDENTIFICATION IN A COMPLEX WITH PC</scope>
    <scope>HOMODIMERIZATION</scope>
    <scope>SUBCELLULAR LOCATION</scope>
</reference>
<reference key="8">
    <citation type="journal article" date="2008" name="Hereditas">
        <title>Regulation of Abd-B expression by Cyclin G and Corto in the abdominal epithelium of Drosophila.</title>
        <authorList>
            <person name="Salvaing J."/>
            <person name="Mouchel-Vielh E."/>
            <person name="Bloyer S."/>
            <person name="Preiss A."/>
            <person name="Peronnet F."/>
        </authorList>
    </citation>
    <scope>FUNCTION</scope>
</reference>
<reference key="9">
    <citation type="journal article" date="2008" name="PLoS ONE">
        <title>The enhancer of trithorax and polycomb corto interacts with cyclin G in Drosophila.</title>
        <authorList>
            <person name="Salvaing J."/>
            <person name="Nagel A.C."/>
            <person name="Mouchel-Vielh E."/>
            <person name="Bloyer S."/>
            <person name="Maier D."/>
            <person name="Preiss A."/>
            <person name="Peronnet F."/>
        </authorList>
    </citation>
    <scope>FUNCTION</scope>
    <scope>INTERACTION WITH CYCG</scope>
    <scope>SUBCELLULAR LOCATION</scope>
</reference>
<proteinExistence type="evidence at protein level"/>
<name>CORTO_DROME</name>
<keyword id="KW-0131">Cell cycle</keyword>
<keyword id="KW-0132">Cell division</keyword>
<keyword id="KW-0158">Chromosome</keyword>
<keyword id="KW-0175">Coiled coil</keyword>
<keyword id="KW-0963">Cytoplasm</keyword>
<keyword id="KW-0206">Cytoskeleton</keyword>
<keyword id="KW-0238">DNA-binding</keyword>
<keyword id="KW-0498">Mitosis</keyword>
<keyword id="KW-0539">Nucleus</keyword>
<keyword id="KW-1185">Reference proteome</keyword>
<keyword id="KW-0804">Transcription</keyword>
<keyword id="KW-0805">Transcription regulation</keyword>
<organism>
    <name type="scientific">Drosophila melanogaster</name>
    <name type="common">Fruit fly</name>
    <dbReference type="NCBI Taxonomy" id="7227"/>
    <lineage>
        <taxon>Eukaryota</taxon>
        <taxon>Metazoa</taxon>
        <taxon>Ecdysozoa</taxon>
        <taxon>Arthropoda</taxon>
        <taxon>Hexapoda</taxon>
        <taxon>Insecta</taxon>
        <taxon>Pterygota</taxon>
        <taxon>Neoptera</taxon>
        <taxon>Endopterygota</taxon>
        <taxon>Diptera</taxon>
        <taxon>Brachycera</taxon>
        <taxon>Muscomorpha</taxon>
        <taxon>Ephydroidea</taxon>
        <taxon>Drosophilidae</taxon>
        <taxon>Drosophila</taxon>
        <taxon>Sophophora</taxon>
    </lineage>
</organism>